<dbReference type="EMBL" id="AB099526">
    <property type="protein sequence ID" value="BAC87710.1"/>
    <property type="molecule type" value="mRNA"/>
</dbReference>
<dbReference type="EMBL" id="AB099704">
    <property type="protein sequence ID" value="BAC87712.1"/>
    <property type="molecule type" value="Genomic_DNA"/>
</dbReference>
<dbReference type="EMBL" id="AK031782">
    <property type="protein sequence ID" value="BAC27546.1"/>
    <property type="molecule type" value="mRNA"/>
</dbReference>
<dbReference type="EMBL" id="BC059178">
    <property type="protein sequence ID" value="AAH59178.1"/>
    <property type="molecule type" value="mRNA"/>
</dbReference>
<dbReference type="CCDS" id="CCDS27483.1"/>
<dbReference type="RefSeq" id="NP_955520.1">
    <property type="nucleotide sequence ID" value="NM_199449.2"/>
</dbReference>
<dbReference type="RefSeq" id="XP_011243990.1">
    <property type="nucleotide sequence ID" value="XM_011245688.4"/>
</dbReference>
<dbReference type="RefSeq" id="XP_011243991.1">
    <property type="nucleotide sequence ID" value="XM_011245689.3"/>
</dbReference>
<dbReference type="SMR" id="Q8C0C0"/>
<dbReference type="BioGRID" id="239920">
    <property type="interactions" value="2"/>
</dbReference>
<dbReference type="FunCoup" id="Q8C0C0">
    <property type="interactions" value="2245"/>
</dbReference>
<dbReference type="IntAct" id="Q8C0C0">
    <property type="interactions" value="2"/>
</dbReference>
<dbReference type="MINT" id="Q8C0C0"/>
<dbReference type="STRING" id="10090.ENSMUSP00000094164"/>
<dbReference type="GlyGen" id="Q8C0C0">
    <property type="glycosylation" value="1 site, 1 O-linked glycan (1 site)"/>
</dbReference>
<dbReference type="iPTMnet" id="Q8C0C0"/>
<dbReference type="PhosphoSitePlus" id="Q8C0C0"/>
<dbReference type="PaxDb" id="10090-ENSMUSP00000094164"/>
<dbReference type="ProteomicsDB" id="302130"/>
<dbReference type="Pumba" id="Q8C0C0"/>
<dbReference type="Antibodypedia" id="13770">
    <property type="antibodies" value="391 antibodies from 36 providers"/>
</dbReference>
<dbReference type="DNASU" id="387609"/>
<dbReference type="Ensembl" id="ENSMUST00000096430.11">
    <property type="protein sequence ID" value="ENSMUSP00000094164.5"/>
    <property type="gene ID" value="ENSMUSG00000071757.11"/>
</dbReference>
<dbReference type="GeneID" id="387609"/>
<dbReference type="KEGG" id="mmu:387609"/>
<dbReference type="UCSC" id="uc007vsp.1">
    <property type="organism name" value="mouse"/>
</dbReference>
<dbReference type="AGR" id="MGI:2683087"/>
<dbReference type="CTD" id="22882"/>
<dbReference type="MGI" id="MGI:2683087">
    <property type="gene designation" value="Zhx2"/>
</dbReference>
<dbReference type="VEuPathDB" id="HostDB:ENSMUSG00000071757"/>
<dbReference type="eggNOG" id="ENOG502RHIC">
    <property type="taxonomic scope" value="Eukaryota"/>
</dbReference>
<dbReference type="GeneTree" id="ENSGT00950000182893"/>
<dbReference type="HOGENOM" id="CLU_009147_1_0_1"/>
<dbReference type="InParanoid" id="Q8C0C0"/>
<dbReference type="OMA" id="ENHMEGT"/>
<dbReference type="OrthoDB" id="6159439at2759"/>
<dbReference type="PhylomeDB" id="Q8C0C0"/>
<dbReference type="TreeFam" id="TF333363"/>
<dbReference type="BioGRID-ORCS" id="387609">
    <property type="hits" value="3 hits in 79 CRISPR screens"/>
</dbReference>
<dbReference type="ChiTaRS" id="Zhx2">
    <property type="organism name" value="mouse"/>
</dbReference>
<dbReference type="PRO" id="PR:Q8C0C0"/>
<dbReference type="Proteomes" id="UP000000589">
    <property type="component" value="Chromosome 15"/>
</dbReference>
<dbReference type="RNAct" id="Q8C0C0">
    <property type="molecule type" value="protein"/>
</dbReference>
<dbReference type="Bgee" id="ENSMUSG00000071757">
    <property type="expression patterns" value="Expressed in knee joint and 177 other cell types or tissues"/>
</dbReference>
<dbReference type="GO" id="GO:0005829">
    <property type="term" value="C:cytosol"/>
    <property type="evidence" value="ECO:0007669"/>
    <property type="project" value="Ensembl"/>
</dbReference>
<dbReference type="GO" id="GO:0005654">
    <property type="term" value="C:nucleoplasm"/>
    <property type="evidence" value="ECO:0007669"/>
    <property type="project" value="Ensembl"/>
</dbReference>
<dbReference type="GO" id="GO:0005634">
    <property type="term" value="C:nucleus"/>
    <property type="evidence" value="ECO:0000314"/>
    <property type="project" value="UniProtKB"/>
</dbReference>
<dbReference type="GO" id="GO:0003677">
    <property type="term" value="F:DNA binding"/>
    <property type="evidence" value="ECO:0007669"/>
    <property type="project" value="UniProtKB-KW"/>
</dbReference>
<dbReference type="GO" id="GO:0046982">
    <property type="term" value="F:protein heterodimerization activity"/>
    <property type="evidence" value="ECO:0000250"/>
    <property type="project" value="UniProtKB"/>
</dbReference>
<dbReference type="GO" id="GO:0042803">
    <property type="term" value="F:protein homodimerization activity"/>
    <property type="evidence" value="ECO:0000250"/>
    <property type="project" value="UniProtKB"/>
</dbReference>
<dbReference type="GO" id="GO:0008270">
    <property type="term" value="F:zinc ion binding"/>
    <property type="evidence" value="ECO:0007669"/>
    <property type="project" value="UniProtKB-KW"/>
</dbReference>
<dbReference type="GO" id="GO:0021953">
    <property type="term" value="P:central nervous system neuron differentiation"/>
    <property type="evidence" value="ECO:0000314"/>
    <property type="project" value="MGI"/>
</dbReference>
<dbReference type="GO" id="GO:0006402">
    <property type="term" value="P:mRNA catabolic process"/>
    <property type="evidence" value="ECO:0000314"/>
    <property type="project" value="MGI"/>
</dbReference>
<dbReference type="GO" id="GO:0045892">
    <property type="term" value="P:negative regulation of DNA-templated transcription"/>
    <property type="evidence" value="ECO:0000250"/>
    <property type="project" value="UniProtKB"/>
</dbReference>
<dbReference type="GO" id="GO:0045665">
    <property type="term" value="P:negative regulation of neuron differentiation"/>
    <property type="evidence" value="ECO:0000314"/>
    <property type="project" value="MGI"/>
</dbReference>
<dbReference type="GO" id="GO:0000122">
    <property type="term" value="P:negative regulation of transcription by RNA polymerase II"/>
    <property type="evidence" value="ECO:0000314"/>
    <property type="project" value="MGI"/>
</dbReference>
<dbReference type="GO" id="GO:0006357">
    <property type="term" value="P:regulation of transcription by RNA polymerase II"/>
    <property type="evidence" value="ECO:0000315"/>
    <property type="project" value="MGI"/>
</dbReference>
<dbReference type="GO" id="GO:0060040">
    <property type="term" value="P:retinal bipolar neuron differentiation"/>
    <property type="evidence" value="ECO:0000315"/>
    <property type="project" value="UniProtKB"/>
</dbReference>
<dbReference type="GO" id="GO:0035019">
    <property type="term" value="P:somatic stem cell population maintenance"/>
    <property type="evidence" value="ECO:0000314"/>
    <property type="project" value="MGI"/>
</dbReference>
<dbReference type="CDD" id="cd00086">
    <property type="entry name" value="homeodomain"/>
    <property type="match status" value="4"/>
</dbReference>
<dbReference type="FunFam" id="3.30.160.60:FF:000296">
    <property type="entry name" value="Zinc fingers and homeoboxes protein 1"/>
    <property type="match status" value="1"/>
</dbReference>
<dbReference type="FunFam" id="1.10.10.60:FF:000247">
    <property type="entry name" value="Zinc fingers and homeoboxes protein 2"/>
    <property type="match status" value="1"/>
</dbReference>
<dbReference type="FunFam" id="1.10.10.60:FF:000264">
    <property type="entry name" value="zinc fingers and homeoboxes protein 2"/>
    <property type="match status" value="1"/>
</dbReference>
<dbReference type="FunFam" id="1.10.10.60:FF:000272">
    <property type="entry name" value="zinc fingers and homeoboxes protein 2"/>
    <property type="match status" value="1"/>
</dbReference>
<dbReference type="FunFam" id="1.10.10.60:FF:000062">
    <property type="entry name" value="zinc fingers and homeoboxes protein 3"/>
    <property type="match status" value="1"/>
</dbReference>
<dbReference type="Gene3D" id="3.30.160.60">
    <property type="entry name" value="Classic Zinc Finger"/>
    <property type="match status" value="1"/>
</dbReference>
<dbReference type="Gene3D" id="1.10.10.60">
    <property type="entry name" value="Homeodomain-like"/>
    <property type="match status" value="4"/>
</dbReference>
<dbReference type="InterPro" id="IPR001356">
    <property type="entry name" value="HD"/>
</dbReference>
<dbReference type="InterPro" id="IPR009057">
    <property type="entry name" value="Homeodomain-like_sf"/>
</dbReference>
<dbReference type="InterPro" id="IPR041057">
    <property type="entry name" value="ZHX_Znf_C2H2"/>
</dbReference>
<dbReference type="InterPro" id="IPR036236">
    <property type="entry name" value="Znf_C2H2_sf"/>
</dbReference>
<dbReference type="InterPro" id="IPR013087">
    <property type="entry name" value="Znf_C2H2_type"/>
</dbReference>
<dbReference type="PANTHER" id="PTHR15467:SF5">
    <property type="entry name" value="ZINC FINGERS AND HOMEOBOXES PROTEIN 2"/>
    <property type="match status" value="1"/>
</dbReference>
<dbReference type="PANTHER" id="PTHR15467">
    <property type="entry name" value="ZINC-FINGERS AND HOMEOBOXES RELATED"/>
    <property type="match status" value="1"/>
</dbReference>
<dbReference type="Pfam" id="PF00046">
    <property type="entry name" value="Homeodomain"/>
    <property type="match status" value="3"/>
</dbReference>
<dbReference type="Pfam" id="PF18387">
    <property type="entry name" value="zf_C2H2_ZHX"/>
    <property type="match status" value="1"/>
</dbReference>
<dbReference type="SMART" id="SM00389">
    <property type="entry name" value="HOX"/>
    <property type="match status" value="4"/>
</dbReference>
<dbReference type="SMART" id="SM00355">
    <property type="entry name" value="ZnF_C2H2"/>
    <property type="match status" value="2"/>
</dbReference>
<dbReference type="SUPFAM" id="SSF57667">
    <property type="entry name" value="beta-beta-alpha zinc fingers"/>
    <property type="match status" value="2"/>
</dbReference>
<dbReference type="SUPFAM" id="SSF46689">
    <property type="entry name" value="Homeodomain-like"/>
    <property type="match status" value="4"/>
</dbReference>
<dbReference type="PROSITE" id="PS50071">
    <property type="entry name" value="HOMEOBOX_2"/>
    <property type="match status" value="3"/>
</dbReference>
<dbReference type="PROSITE" id="PS50157">
    <property type="entry name" value="ZINC_FINGER_C2H2_2"/>
    <property type="match status" value="1"/>
</dbReference>
<comment type="function">
    <text evidence="1 7 8">Acts as a transcriptional repressor (PubMed:19515908). Represses the promoter activity of the CDC25C gene stimulated by NFYA (By similarity). May play a role in retinal development where it regulates the composition of bipolar cell populations, by promoting differentiation of bipolar OFF-type cells (PubMed:30146259). In the brain, may promote maintenance and suppress differentiation of neural progenitor cells in the developing cortex (PubMed:19515908).</text>
</comment>
<comment type="subunit">
    <text evidence="1 7">Homodimer (via homeobox domain 1) (By similarity). Heterodimer with ZHX1 (via homeobox domain 1) (By similarity). Heterodimer with ZHX3 (via homeobox domain 1) (By similarity). Heterodimerization with ZHX1 is not necessary for repressor activity (By similarity). Interacts (via homeobox domain) with NFYA (via N-terminus) (By similarity). Interacts with EFNB1 intracellular domain peptide; the interaction enhances ZHX2 transcriptional repression activity (PubMed:19515908).</text>
</comment>
<comment type="interaction">
    <interactant intactId="EBI-646042">
        <id>Q8C0C0</id>
    </interactant>
    <interactant intactId="EBI-646023">
        <id>Q8BUR4</id>
        <label>Dock1</label>
    </interactant>
    <organismsDiffer>false</organismsDiffer>
    <experiments>3</experiments>
</comment>
<comment type="subcellular location">
    <subcellularLocation>
        <location evidence="3 6 7 8">Nucleus</location>
    </subcellularLocation>
    <text evidence="7">Colocalizes with EFNB1 intracellular domain in the nucleus.</text>
</comment>
<comment type="tissue specificity">
    <text evidence="5 8">Expressed in retina where it localizes to Muller glial cells of the inner nuclear layer (at protein level) (PubMed:30146259). Detected in heart, brain, spleen, lung, liver, skeletal muscle, kidney and testis (PubMed:14659886).</text>
</comment>
<comment type="developmental stage">
    <text evidence="7 8">Strongly expressed in retina from embryonic stages 14.5 dpc to 17.5 dpc, where it is widely detected in retinal progenitor cells (at protein level) (PubMed:30146259). Expression then gradually declines and stabilizes at a low level by postnatal day 10 (P10) (at protein level) (PubMed:30146259). At P0, expression refines to the inner half of the neuroblastic layer (at protein level) (PubMed:30146259). Expression further refines to the retinal inner nuclear layer from stage P3 onwards (at protein level) (PubMed:30146259). Detected in bipolar OFF-type cells at stage P7 (at protein level) (PubMed:30146259). By stage P10, has only weak expression in bipolar OFF-type cells but strong expression in Muller glial cells (at protein level) (PubMed:30146259). Detected in brain at embryonic stages 12.5 dpc to 15.5 dpc, specifically in the ventricular zone and subventricular zone of the cortex (at protein level) (PubMed:19515908). Probably localizes to neural progenitor cells in the developing cortex (at protein level) (PubMed:19515908).</text>
</comment>
<comment type="similarity">
    <text evidence="9">Belongs to the ZHX family.</text>
</comment>
<protein>
    <recommendedName>
        <fullName>Zinc fingers and homeoboxes protein 2</fullName>
    </recommendedName>
    <alternativeName>
        <fullName>Alpha-fetoprotein regulator 1</fullName>
        <shortName>AFP regulator 1</shortName>
    </alternativeName>
    <alternativeName>
        <fullName>Regulator of AFP</fullName>
    </alternativeName>
    <alternativeName>
        <fullName>Zinc finger and homeodomain protein 2</fullName>
    </alternativeName>
</protein>
<keyword id="KW-0221">Differentiation</keyword>
<keyword id="KW-0238">DNA-binding</keyword>
<keyword id="KW-0371">Homeobox</keyword>
<keyword id="KW-1017">Isopeptide bond</keyword>
<keyword id="KW-0479">Metal-binding</keyword>
<keyword id="KW-0524">Neurogenesis</keyword>
<keyword id="KW-0539">Nucleus</keyword>
<keyword id="KW-0597">Phosphoprotein</keyword>
<keyword id="KW-1185">Reference proteome</keyword>
<keyword id="KW-0677">Repeat</keyword>
<keyword id="KW-0678">Repressor</keyword>
<keyword id="KW-0804">Transcription</keyword>
<keyword id="KW-0805">Transcription regulation</keyword>
<keyword id="KW-0832">Ubl conjugation</keyword>
<keyword id="KW-0862">Zinc</keyword>
<keyword id="KW-0863">Zinc-finger</keyword>
<accession>Q8C0C0</accession>
<name>ZHX2_MOUSE</name>
<organism evidence="11">
    <name type="scientific">Mus musculus</name>
    <name type="common">Mouse</name>
    <dbReference type="NCBI Taxonomy" id="10090"/>
    <lineage>
        <taxon>Eukaryota</taxon>
        <taxon>Metazoa</taxon>
        <taxon>Chordata</taxon>
        <taxon>Craniata</taxon>
        <taxon>Vertebrata</taxon>
        <taxon>Euteleostomi</taxon>
        <taxon>Mammalia</taxon>
        <taxon>Eutheria</taxon>
        <taxon>Euarchontoglires</taxon>
        <taxon>Glires</taxon>
        <taxon>Rodentia</taxon>
        <taxon>Myomorpha</taxon>
        <taxon>Muroidea</taxon>
        <taxon>Muridae</taxon>
        <taxon>Murinae</taxon>
        <taxon>Mus</taxon>
        <taxon>Mus</taxon>
    </lineage>
</organism>
<gene>
    <name type="primary">Zhx2</name>
    <name type="synonym">Afr1</name>
    <name type="synonym">Raf</name>
</gene>
<reference evidence="9" key="1">
    <citation type="journal article" date="2003" name="Gene">
        <title>The mouse zinc-fingers and homeoboxes (ZHX) family: ZHX2 forms a heterodimer with ZHX3.</title>
        <authorList>
            <person name="Kawata H."/>
            <person name="Yamada K."/>
            <person name="Shou Z."/>
            <person name="Mizutani T."/>
            <person name="Miyamoto K."/>
        </authorList>
    </citation>
    <scope>NUCLEOTIDE SEQUENCE [GENOMIC DNA / MRNA]</scope>
    <scope>TISSUE SPECIFICITY</scope>
    <source>
        <strain evidence="5">129</strain>
    </source>
</reference>
<reference key="2">
    <citation type="journal article" date="2005" name="Science">
        <title>The transcriptional landscape of the mammalian genome.</title>
        <authorList>
            <person name="Carninci P."/>
            <person name="Kasukawa T."/>
            <person name="Katayama S."/>
            <person name="Gough J."/>
            <person name="Frith M.C."/>
            <person name="Maeda N."/>
            <person name="Oyama R."/>
            <person name="Ravasi T."/>
            <person name="Lenhard B."/>
            <person name="Wells C."/>
            <person name="Kodzius R."/>
            <person name="Shimokawa K."/>
            <person name="Bajic V.B."/>
            <person name="Brenner S.E."/>
            <person name="Batalov S."/>
            <person name="Forrest A.R."/>
            <person name="Zavolan M."/>
            <person name="Davis M.J."/>
            <person name="Wilming L.G."/>
            <person name="Aidinis V."/>
            <person name="Allen J.E."/>
            <person name="Ambesi-Impiombato A."/>
            <person name="Apweiler R."/>
            <person name="Aturaliya R.N."/>
            <person name="Bailey T.L."/>
            <person name="Bansal M."/>
            <person name="Baxter L."/>
            <person name="Beisel K.W."/>
            <person name="Bersano T."/>
            <person name="Bono H."/>
            <person name="Chalk A.M."/>
            <person name="Chiu K.P."/>
            <person name="Choudhary V."/>
            <person name="Christoffels A."/>
            <person name="Clutterbuck D.R."/>
            <person name="Crowe M.L."/>
            <person name="Dalla E."/>
            <person name="Dalrymple B.P."/>
            <person name="de Bono B."/>
            <person name="Della Gatta G."/>
            <person name="di Bernardo D."/>
            <person name="Down T."/>
            <person name="Engstrom P."/>
            <person name="Fagiolini M."/>
            <person name="Faulkner G."/>
            <person name="Fletcher C.F."/>
            <person name="Fukushima T."/>
            <person name="Furuno M."/>
            <person name="Futaki S."/>
            <person name="Gariboldi M."/>
            <person name="Georgii-Hemming P."/>
            <person name="Gingeras T.R."/>
            <person name="Gojobori T."/>
            <person name="Green R.E."/>
            <person name="Gustincich S."/>
            <person name="Harbers M."/>
            <person name="Hayashi Y."/>
            <person name="Hensch T.K."/>
            <person name="Hirokawa N."/>
            <person name="Hill D."/>
            <person name="Huminiecki L."/>
            <person name="Iacono M."/>
            <person name="Ikeo K."/>
            <person name="Iwama A."/>
            <person name="Ishikawa T."/>
            <person name="Jakt M."/>
            <person name="Kanapin A."/>
            <person name="Katoh M."/>
            <person name="Kawasawa Y."/>
            <person name="Kelso J."/>
            <person name="Kitamura H."/>
            <person name="Kitano H."/>
            <person name="Kollias G."/>
            <person name="Krishnan S.P."/>
            <person name="Kruger A."/>
            <person name="Kummerfeld S.K."/>
            <person name="Kurochkin I.V."/>
            <person name="Lareau L.F."/>
            <person name="Lazarevic D."/>
            <person name="Lipovich L."/>
            <person name="Liu J."/>
            <person name="Liuni S."/>
            <person name="McWilliam S."/>
            <person name="Madan Babu M."/>
            <person name="Madera M."/>
            <person name="Marchionni L."/>
            <person name="Matsuda H."/>
            <person name="Matsuzawa S."/>
            <person name="Miki H."/>
            <person name="Mignone F."/>
            <person name="Miyake S."/>
            <person name="Morris K."/>
            <person name="Mottagui-Tabar S."/>
            <person name="Mulder N."/>
            <person name="Nakano N."/>
            <person name="Nakauchi H."/>
            <person name="Ng P."/>
            <person name="Nilsson R."/>
            <person name="Nishiguchi S."/>
            <person name="Nishikawa S."/>
            <person name="Nori F."/>
            <person name="Ohara O."/>
            <person name="Okazaki Y."/>
            <person name="Orlando V."/>
            <person name="Pang K.C."/>
            <person name="Pavan W.J."/>
            <person name="Pavesi G."/>
            <person name="Pesole G."/>
            <person name="Petrovsky N."/>
            <person name="Piazza S."/>
            <person name="Reed J."/>
            <person name="Reid J.F."/>
            <person name="Ring B.Z."/>
            <person name="Ringwald M."/>
            <person name="Rost B."/>
            <person name="Ruan Y."/>
            <person name="Salzberg S.L."/>
            <person name="Sandelin A."/>
            <person name="Schneider C."/>
            <person name="Schoenbach C."/>
            <person name="Sekiguchi K."/>
            <person name="Semple C.A."/>
            <person name="Seno S."/>
            <person name="Sessa L."/>
            <person name="Sheng Y."/>
            <person name="Shibata Y."/>
            <person name="Shimada H."/>
            <person name="Shimada K."/>
            <person name="Silva D."/>
            <person name="Sinclair B."/>
            <person name="Sperling S."/>
            <person name="Stupka E."/>
            <person name="Sugiura K."/>
            <person name="Sultana R."/>
            <person name="Takenaka Y."/>
            <person name="Taki K."/>
            <person name="Tammoja K."/>
            <person name="Tan S.L."/>
            <person name="Tang S."/>
            <person name="Taylor M.S."/>
            <person name="Tegner J."/>
            <person name="Teichmann S.A."/>
            <person name="Ueda H.R."/>
            <person name="van Nimwegen E."/>
            <person name="Verardo R."/>
            <person name="Wei C.L."/>
            <person name="Yagi K."/>
            <person name="Yamanishi H."/>
            <person name="Zabarovsky E."/>
            <person name="Zhu S."/>
            <person name="Zimmer A."/>
            <person name="Hide W."/>
            <person name="Bult C."/>
            <person name="Grimmond S.M."/>
            <person name="Teasdale R.D."/>
            <person name="Liu E.T."/>
            <person name="Brusic V."/>
            <person name="Quackenbush J."/>
            <person name="Wahlestedt C."/>
            <person name="Mattick J.S."/>
            <person name="Hume D.A."/>
            <person name="Kai C."/>
            <person name="Sasaki D."/>
            <person name="Tomaru Y."/>
            <person name="Fukuda S."/>
            <person name="Kanamori-Katayama M."/>
            <person name="Suzuki M."/>
            <person name="Aoki J."/>
            <person name="Arakawa T."/>
            <person name="Iida J."/>
            <person name="Imamura K."/>
            <person name="Itoh M."/>
            <person name="Kato T."/>
            <person name="Kawaji H."/>
            <person name="Kawagashira N."/>
            <person name="Kawashima T."/>
            <person name="Kojima M."/>
            <person name="Kondo S."/>
            <person name="Konno H."/>
            <person name="Nakano K."/>
            <person name="Ninomiya N."/>
            <person name="Nishio T."/>
            <person name="Okada M."/>
            <person name="Plessy C."/>
            <person name="Shibata K."/>
            <person name="Shiraki T."/>
            <person name="Suzuki S."/>
            <person name="Tagami M."/>
            <person name="Waki K."/>
            <person name="Watahiki A."/>
            <person name="Okamura-Oho Y."/>
            <person name="Suzuki H."/>
            <person name="Kawai J."/>
            <person name="Hayashizaki Y."/>
        </authorList>
    </citation>
    <scope>NUCLEOTIDE SEQUENCE [LARGE SCALE MRNA]</scope>
    <source>
        <strain>C57BL/6J</strain>
        <tissue>Head</tissue>
    </source>
</reference>
<reference evidence="9" key="3">
    <citation type="journal article" date="2004" name="Genome Res.">
        <title>The status, quality, and expansion of the NIH full-length cDNA project: the Mammalian Gene Collection (MGC).</title>
        <authorList>
            <consortium name="The MGC Project Team"/>
        </authorList>
    </citation>
    <scope>NUCLEOTIDE SEQUENCE [LARGE SCALE MRNA]</scope>
    <source>
        <strain evidence="10">C57BL/6J</strain>
        <tissue evidence="10">Brain</tissue>
    </source>
</reference>
<reference key="4">
    <citation type="journal article" date="2006" name="J. Biol. Chem.">
        <title>ZHX proteins regulate podocyte gene expression during the development of nephrotic syndrome.</title>
        <authorList>
            <person name="Liu G."/>
            <person name="Clement L.C."/>
            <person name="Kanwar Y.S."/>
            <person name="Avila-Casado C."/>
            <person name="Chugh S.S."/>
        </authorList>
    </citation>
    <scope>SUBCELLULAR LOCATION</scope>
    <source>
        <tissue>Kidney</tissue>
    </source>
</reference>
<reference key="5">
    <citation type="journal article" date="2009" name="J. Neurosci.">
        <title>ZHX2 Interacts with Ephrin-B and regulates neural progenitor maintenance in the developing cerebral cortex.</title>
        <authorList>
            <person name="Wu C."/>
            <person name="Qiu R."/>
            <person name="Wang J."/>
            <person name="Zhang H."/>
            <person name="Murai K."/>
            <person name="Lu Q."/>
        </authorList>
    </citation>
    <scope>FUNCTION</scope>
    <scope>SUBCELLULAR LOCATION</scope>
    <scope>INTERACTION WITH EFNB1</scope>
</reference>
<reference key="6">
    <citation type="journal article" date="2010" name="Cell">
        <title>A tissue-specific atlas of mouse protein phosphorylation and expression.</title>
        <authorList>
            <person name="Huttlin E.L."/>
            <person name="Jedrychowski M.P."/>
            <person name="Elias J.E."/>
            <person name="Goswami T."/>
            <person name="Rad R."/>
            <person name="Beausoleil S.A."/>
            <person name="Villen J."/>
            <person name="Haas W."/>
            <person name="Sowa M.E."/>
            <person name="Gygi S.P."/>
        </authorList>
    </citation>
    <scope>PHOSPHORYLATION [LARGE SCALE ANALYSIS] AT SER-824 AND SER-826</scope>
    <scope>IDENTIFICATION BY MASS SPECTROMETRY [LARGE SCALE ANALYSIS]</scope>
    <source>
        <tissue>Brain</tissue>
        <tissue>Brown adipose tissue</tissue>
        <tissue>Kidney</tissue>
        <tissue>Lung</tissue>
        <tissue>Spleen</tissue>
        <tissue>Testis</tissue>
    </source>
</reference>
<reference key="7">
    <citation type="journal article" date="2018" name="Biochem. Biophys. Res. Commun.">
        <title>The role of Zhx2 transcription factor in bipolar cell differentiation during mouse retinal development.</title>
        <authorList>
            <person name="Kawamura Y."/>
            <person name="Yamanaka K."/>
            <person name="Poh B."/>
            <person name="Kuribayashi H."/>
            <person name="Koso H."/>
            <person name="Watanabe S."/>
        </authorList>
    </citation>
    <scope>FUNCTION</scope>
    <scope>SUBCELLULAR LOCATION</scope>
    <scope>TISSUE SPECIFICITY</scope>
    <scope>DEVELOPMENTAL STAGE</scope>
</reference>
<sequence length="836" mass="92259">MASKRKSTTPCMVRTSQVLEQDMLEEADRAKDKGAGMPQSDVTKDSWAAEPEHSSKETEVVEVKSMGENLSKKLQGGYECKYCPYSTQNLNEFTEHVDMQHPNVILNPLYVCAECNFTTKKYDSLSDHNSKFHPGETNFKLKLIKRNNQTVLEQSIEATNHVVPITASGPGSSDNDPGVSVGKTPMTKTGKLKADAKKVPKKPDEAAPENHMEGTARLVTDTAEILARLGSVELLQDSLGHVMPSVQLPPNINLVPKVPVPLNTTKYNSALDTNATMINSFNKFPYPTQAELSWLTAASKHPEEHIRIWFATQRLKHGISWSPEEVEEARKKMFNGTIQSVPPTITVLPAQLTPTKVSQPILQTALPCQILGQPSLVLTQVTSGSTTVSCSPITLAVAGVTNHGQKRPLVTPQAAPEPKRPHIAQVPEPPPKVANTPLTPASDRKKTKLQIAHLKASFLQSQFPDDAEVYRLIEVTGLARSEIKKWFSDHRYRCQRGIVHITSESLAKDQMAITGTRHGRTYHVYPDFAPQKFKEKSQGQLKTLEDSFLKSSFPTQAEVERLRVETKLSRREIDSWFSERRKLRDSMEQAVLDSMGSGKKGSDAVAPNGALSRLDQLSGAQLAGSLPSPSSAIVQNQEQVHLLRSTFARTQWPTPQEYDQLAAKTGLVRTEIVRWFKENRCLLKTGTLSWLEQYQRHHMSDDRGRDAVSRKVAKQVAESPKNGSEAAHQYAKDPKALSEEDSEKLVPRMKVGGDPTKDCLAGKPSEATSDRSEGSRDGQGSEENEESGIVDFVEVTVGEEDAISEKWGSWSRRVAEGTVERADSDSDSTPAEAGQA</sequence>
<evidence type="ECO:0000250" key="1">
    <source>
        <dbReference type="UniProtKB" id="Q9Y6X8"/>
    </source>
</evidence>
<evidence type="ECO:0000255" key="2">
    <source>
        <dbReference type="PROSITE-ProRule" id="PRU00042"/>
    </source>
</evidence>
<evidence type="ECO:0000255" key="3">
    <source>
        <dbReference type="PROSITE-ProRule" id="PRU00108"/>
    </source>
</evidence>
<evidence type="ECO:0000256" key="4">
    <source>
        <dbReference type="SAM" id="MobiDB-lite"/>
    </source>
</evidence>
<evidence type="ECO:0000269" key="5">
    <source>
    </source>
</evidence>
<evidence type="ECO:0000269" key="6">
    <source>
    </source>
</evidence>
<evidence type="ECO:0000269" key="7">
    <source>
    </source>
</evidence>
<evidence type="ECO:0000269" key="8">
    <source>
    </source>
</evidence>
<evidence type="ECO:0000305" key="9"/>
<evidence type="ECO:0000312" key="10">
    <source>
        <dbReference type="EMBL" id="AAH59178.1"/>
    </source>
</evidence>
<evidence type="ECO:0000312" key="11">
    <source>
        <dbReference type="EMBL" id="BAC27546.1"/>
    </source>
</evidence>
<evidence type="ECO:0007744" key="12">
    <source>
    </source>
</evidence>
<proteinExistence type="evidence at protein level"/>
<feature type="chain" id="PRO_0000049392" description="Zinc fingers and homeoboxes protein 2">
    <location>
        <begin position="1"/>
        <end position="836"/>
    </location>
</feature>
<feature type="zinc finger region" description="C2H2-type 1" evidence="2 9">
    <location>
        <begin position="78"/>
        <end position="101"/>
    </location>
</feature>
<feature type="zinc finger region" description="C2H2-type 2" evidence="2 9">
    <location>
        <begin position="110"/>
        <end position="133"/>
    </location>
</feature>
<feature type="DNA-binding region" description="Homeobox 1" evidence="3 9">
    <location>
        <begin position="263"/>
        <end position="324"/>
    </location>
</feature>
<feature type="DNA-binding region" description="Homeobox 2" evidence="3 9">
    <location>
        <begin position="439"/>
        <end position="501"/>
    </location>
</feature>
<feature type="DNA-binding region" description="Homeobox 3" evidence="3 9">
    <location>
        <begin position="530"/>
        <end position="591"/>
    </location>
</feature>
<feature type="DNA-binding region" description="Homeobox 4" evidence="3 9">
    <location>
        <begin position="628"/>
        <end position="690"/>
    </location>
</feature>
<feature type="region of interest" description="Disordered" evidence="4">
    <location>
        <begin position="1"/>
        <end position="61"/>
    </location>
</feature>
<feature type="region of interest" description="Interaction with EFNB1" evidence="7">
    <location>
        <begin position="27"/>
        <end position="77"/>
    </location>
</feature>
<feature type="region of interest" description="Disordered" evidence="4">
    <location>
        <begin position="164"/>
        <end position="214"/>
    </location>
</feature>
<feature type="region of interest" description="Required for homodimerization" evidence="1">
    <location>
        <begin position="195"/>
        <end position="358"/>
    </location>
</feature>
<feature type="region of interest" description="Required for interaction with NFYA" evidence="1">
    <location>
        <begin position="263"/>
        <end position="497"/>
    </location>
</feature>
<feature type="region of interest" description="Required for repressor activity" evidence="1">
    <location>
        <begin position="263"/>
        <end position="446"/>
    </location>
</feature>
<feature type="region of interest" description="Required for nuclear localization" evidence="1">
    <location>
        <begin position="317"/>
        <end position="446"/>
    </location>
</feature>
<feature type="region of interest" description="Disordered" evidence="4">
    <location>
        <begin position="404"/>
        <end position="442"/>
    </location>
</feature>
<feature type="region of interest" description="Disordered" evidence="4">
    <location>
        <begin position="699"/>
        <end position="836"/>
    </location>
</feature>
<feature type="compositionally biased region" description="Polar residues" evidence="4">
    <location>
        <begin position="8"/>
        <end position="19"/>
    </location>
</feature>
<feature type="compositionally biased region" description="Basic and acidic residues" evidence="4">
    <location>
        <begin position="50"/>
        <end position="61"/>
    </location>
</feature>
<feature type="compositionally biased region" description="Basic and acidic residues" evidence="4">
    <location>
        <begin position="192"/>
        <end position="214"/>
    </location>
</feature>
<feature type="compositionally biased region" description="Basic and acidic residues" evidence="4">
    <location>
        <begin position="699"/>
        <end position="709"/>
    </location>
</feature>
<feature type="compositionally biased region" description="Basic and acidic residues" evidence="4">
    <location>
        <begin position="730"/>
        <end position="746"/>
    </location>
</feature>
<feature type="compositionally biased region" description="Basic and acidic residues" evidence="4">
    <location>
        <begin position="813"/>
        <end position="824"/>
    </location>
</feature>
<feature type="modified residue" description="Phosphoserine" evidence="12">
    <location>
        <position position="824"/>
    </location>
</feature>
<feature type="modified residue" description="Phosphoserine" evidence="12">
    <location>
        <position position="826"/>
    </location>
</feature>
<feature type="cross-link" description="Glycyl lysine isopeptide (Lys-Gly) (interchain with G-Cter in SUMO2)" evidence="1">
    <location>
        <position position="64"/>
    </location>
</feature>
<feature type="cross-link" description="Glycyl lysine isopeptide (Lys-Gly) (interchain with G-Cter in SUMO2)" evidence="1">
    <location>
        <position position="455"/>
    </location>
</feature>
<feature type="sequence conflict" description="In Ref. 1; BAC87710/BAC87712." evidence="9" ref="1">
    <original>L</original>
    <variation>P</variation>
    <location>
        <position position="70"/>
    </location>
</feature>
<feature type="sequence conflict" description="In Ref. 1; BAC87710/BAC87712." evidence="9" ref="1">
    <original>M</original>
    <variation>L</variation>
    <location>
        <position position="699"/>
    </location>
</feature>